<feature type="initiator methionine" description="Removed" evidence="1">
    <location>
        <position position="1"/>
    </location>
</feature>
<feature type="chain" id="PRO_0000055323" description="Histone H2A">
    <location>
        <begin position="2"/>
        <end position="134"/>
    </location>
</feature>
<feature type="region of interest" description="Disordered" evidence="2">
    <location>
        <begin position="1"/>
        <end position="25"/>
    </location>
</feature>
<feature type="short sequence motif" description="[ST]-Q motif">
    <location>
        <begin position="131"/>
        <end position="132"/>
    </location>
</feature>
<feature type="compositionally biased region" description="Gly residues" evidence="2">
    <location>
        <begin position="1"/>
        <end position="11"/>
    </location>
</feature>
<feature type="site" description="Not ubiquitinated" evidence="3">
    <location>
        <position position="121"/>
    </location>
</feature>
<feature type="modified residue" description="N6-acetyllysine" evidence="1">
    <location>
        <position position="6"/>
    </location>
</feature>
<feature type="modified residue" description="N6-acetyllysine" evidence="1">
    <location>
        <position position="10"/>
    </location>
</feature>
<feature type="modified residue" description="N5-methylglutamine" evidence="1">
    <location>
        <position position="107"/>
    </location>
</feature>
<feature type="modified residue" description="Phosphoserine" evidence="1">
    <location>
        <position position="131"/>
    </location>
</feature>
<gene>
    <name type="primary">hh2a</name>
    <name type="synonym">hta-1</name>
    <name type="ORF">NCU02437</name>
</gene>
<reference key="1">
    <citation type="journal article" date="2002" name="Genetics">
        <title>Identification and characterization of the genes encoding the core histones and histone variants of Neurospora crassa.</title>
        <authorList>
            <person name="Hays S.M."/>
            <person name="Swanson J."/>
            <person name="Selker E.U."/>
        </authorList>
    </citation>
    <scope>NUCLEOTIDE SEQUENCE [GENOMIC DNA]</scope>
</reference>
<reference key="2">
    <citation type="journal article" date="2003" name="Nature">
        <title>The genome sequence of the filamentous fungus Neurospora crassa.</title>
        <authorList>
            <person name="Galagan J.E."/>
            <person name="Calvo S.E."/>
            <person name="Borkovich K.A."/>
            <person name="Selker E.U."/>
            <person name="Read N.D."/>
            <person name="Jaffe D.B."/>
            <person name="FitzHugh W."/>
            <person name="Ma L.-J."/>
            <person name="Smirnov S."/>
            <person name="Purcell S."/>
            <person name="Rehman B."/>
            <person name="Elkins T."/>
            <person name="Engels R."/>
            <person name="Wang S."/>
            <person name="Nielsen C.B."/>
            <person name="Butler J."/>
            <person name="Endrizzi M."/>
            <person name="Qui D."/>
            <person name="Ianakiev P."/>
            <person name="Bell-Pedersen D."/>
            <person name="Nelson M.A."/>
            <person name="Werner-Washburne M."/>
            <person name="Selitrennikoff C.P."/>
            <person name="Kinsey J.A."/>
            <person name="Braun E.L."/>
            <person name="Zelter A."/>
            <person name="Schulte U."/>
            <person name="Kothe G.O."/>
            <person name="Jedd G."/>
            <person name="Mewes H.-W."/>
            <person name="Staben C."/>
            <person name="Marcotte E."/>
            <person name="Greenberg D."/>
            <person name="Roy A."/>
            <person name="Foley K."/>
            <person name="Naylor J."/>
            <person name="Stange-Thomann N."/>
            <person name="Barrett R."/>
            <person name="Gnerre S."/>
            <person name="Kamal M."/>
            <person name="Kamvysselis M."/>
            <person name="Mauceli E.W."/>
            <person name="Bielke C."/>
            <person name="Rudd S."/>
            <person name="Frishman D."/>
            <person name="Krystofova S."/>
            <person name="Rasmussen C."/>
            <person name="Metzenberg R.L."/>
            <person name="Perkins D.D."/>
            <person name="Kroken S."/>
            <person name="Cogoni C."/>
            <person name="Macino G."/>
            <person name="Catcheside D.E.A."/>
            <person name="Li W."/>
            <person name="Pratt R.J."/>
            <person name="Osmani S.A."/>
            <person name="DeSouza C.P.C."/>
            <person name="Glass N.L."/>
            <person name="Orbach M.J."/>
            <person name="Berglund J.A."/>
            <person name="Voelker R."/>
            <person name="Yarden O."/>
            <person name="Plamann M."/>
            <person name="Seiler S."/>
            <person name="Dunlap J.C."/>
            <person name="Radford A."/>
            <person name="Aramayo R."/>
            <person name="Natvig D.O."/>
            <person name="Alex L.A."/>
            <person name="Mannhaupt G."/>
            <person name="Ebbole D.J."/>
            <person name="Freitag M."/>
            <person name="Paulsen I."/>
            <person name="Sachs M.S."/>
            <person name="Lander E.S."/>
            <person name="Nusbaum C."/>
            <person name="Birren B.W."/>
        </authorList>
    </citation>
    <scope>NUCLEOTIDE SEQUENCE [LARGE SCALE GENOMIC DNA]</scope>
    <source>
        <strain>ATCC 24698 / 74-OR23-1A / CBS 708.71 / DSM 1257 / FGSC 987</strain>
    </source>
</reference>
<protein>
    <recommendedName>
        <fullName>Histone H2A</fullName>
    </recommendedName>
</protein>
<organism>
    <name type="scientific">Neurospora crassa (strain ATCC 24698 / 74-OR23-1A / CBS 708.71 / DSM 1257 / FGSC 987)</name>
    <dbReference type="NCBI Taxonomy" id="367110"/>
    <lineage>
        <taxon>Eukaryota</taxon>
        <taxon>Fungi</taxon>
        <taxon>Dikarya</taxon>
        <taxon>Ascomycota</taxon>
        <taxon>Pezizomycotina</taxon>
        <taxon>Sordariomycetes</taxon>
        <taxon>Sordariomycetidae</taxon>
        <taxon>Sordariales</taxon>
        <taxon>Sordariaceae</taxon>
        <taxon>Neurospora</taxon>
    </lineage>
</organism>
<sequence length="134" mass="14154">MTGGGKSGGKASGSKNAQSRSSKAGLAFPVGRVHRLLRKGNYAQRVGAGAPVYLAAVLEYLAAEILELAGNAARDNKKTRIIPRHLQLAIRNDEELNKLLGHVTIAQGGVLPNIHQNLLPKKTGKTGKNASQEL</sequence>
<evidence type="ECO:0000250" key="1"/>
<evidence type="ECO:0000256" key="2">
    <source>
        <dbReference type="SAM" id="MobiDB-lite"/>
    </source>
</evidence>
<evidence type="ECO:0000305" key="3"/>
<keyword id="KW-0007">Acetylation</keyword>
<keyword id="KW-0158">Chromosome</keyword>
<keyword id="KW-0227">DNA damage</keyword>
<keyword id="KW-0234">DNA repair</keyword>
<keyword id="KW-0238">DNA-binding</keyword>
<keyword id="KW-0488">Methylation</keyword>
<keyword id="KW-0544">Nucleosome core</keyword>
<keyword id="KW-0539">Nucleus</keyword>
<keyword id="KW-0597">Phosphoprotein</keyword>
<keyword id="KW-1185">Reference proteome</keyword>
<dbReference type="EMBL" id="AY062171">
    <property type="protein sequence ID" value="AAL38970.1"/>
    <property type="molecule type" value="Genomic_DNA"/>
</dbReference>
<dbReference type="EMBL" id="CM002242">
    <property type="protein sequence ID" value="EAA30206.1"/>
    <property type="molecule type" value="Genomic_DNA"/>
</dbReference>
<dbReference type="RefSeq" id="XP_959442.1">
    <property type="nucleotide sequence ID" value="XM_954349.3"/>
</dbReference>
<dbReference type="SMR" id="Q8X132"/>
<dbReference type="DIP" id="DIP-59935N"/>
<dbReference type="FunCoup" id="Q8X132">
    <property type="interactions" value="932"/>
</dbReference>
<dbReference type="IntAct" id="Q8X132">
    <property type="interactions" value="1"/>
</dbReference>
<dbReference type="STRING" id="367110.Q8X132"/>
<dbReference type="PaxDb" id="5141-EFNCRP00000003190"/>
<dbReference type="EnsemblFungi" id="EAA30206">
    <property type="protein sequence ID" value="EAA30206"/>
    <property type="gene ID" value="NCU02437"/>
</dbReference>
<dbReference type="GeneID" id="3875589"/>
<dbReference type="KEGG" id="ncr:NCU02437"/>
<dbReference type="VEuPathDB" id="FungiDB:NCU02437"/>
<dbReference type="HOGENOM" id="CLU_062828_3_0_1"/>
<dbReference type="InParanoid" id="Q8X132"/>
<dbReference type="OMA" id="CALESQH"/>
<dbReference type="OrthoDB" id="9421954at2759"/>
<dbReference type="Proteomes" id="UP000001805">
    <property type="component" value="Chromosome 7, Linkage Group VII"/>
</dbReference>
<dbReference type="GO" id="GO:0000786">
    <property type="term" value="C:nucleosome"/>
    <property type="evidence" value="ECO:0000318"/>
    <property type="project" value="GO_Central"/>
</dbReference>
<dbReference type="GO" id="GO:0005634">
    <property type="term" value="C:nucleus"/>
    <property type="evidence" value="ECO:0000318"/>
    <property type="project" value="GO_Central"/>
</dbReference>
<dbReference type="GO" id="GO:0003677">
    <property type="term" value="F:DNA binding"/>
    <property type="evidence" value="ECO:0007669"/>
    <property type="project" value="UniProtKB-KW"/>
</dbReference>
<dbReference type="GO" id="GO:0046982">
    <property type="term" value="F:protein heterodimerization activity"/>
    <property type="evidence" value="ECO:0007669"/>
    <property type="project" value="InterPro"/>
</dbReference>
<dbReference type="GO" id="GO:0030527">
    <property type="term" value="F:structural constituent of chromatin"/>
    <property type="evidence" value="ECO:0000318"/>
    <property type="project" value="GO_Central"/>
</dbReference>
<dbReference type="GO" id="GO:0006281">
    <property type="term" value="P:DNA repair"/>
    <property type="evidence" value="ECO:0007669"/>
    <property type="project" value="UniProtKB-KW"/>
</dbReference>
<dbReference type="GO" id="GO:0031507">
    <property type="term" value="P:heterochromatin formation"/>
    <property type="evidence" value="ECO:0000318"/>
    <property type="project" value="GO_Central"/>
</dbReference>
<dbReference type="CDD" id="cd00074">
    <property type="entry name" value="HFD_H2A"/>
    <property type="match status" value="1"/>
</dbReference>
<dbReference type="FunFam" id="1.10.20.10:FF:000008">
    <property type="entry name" value="Histone H2A"/>
    <property type="match status" value="1"/>
</dbReference>
<dbReference type="Gene3D" id="1.10.20.10">
    <property type="entry name" value="Histone, subunit A"/>
    <property type="match status" value="1"/>
</dbReference>
<dbReference type="InterPro" id="IPR009072">
    <property type="entry name" value="Histone-fold"/>
</dbReference>
<dbReference type="InterPro" id="IPR002119">
    <property type="entry name" value="Histone_H2A"/>
</dbReference>
<dbReference type="InterPro" id="IPR007125">
    <property type="entry name" value="Histone_H2A/H2B/H3"/>
</dbReference>
<dbReference type="InterPro" id="IPR032454">
    <property type="entry name" value="Histone_H2A_C"/>
</dbReference>
<dbReference type="InterPro" id="IPR032458">
    <property type="entry name" value="Histone_H2A_CS"/>
</dbReference>
<dbReference type="PANTHER" id="PTHR23430">
    <property type="entry name" value="HISTONE H2A"/>
    <property type="match status" value="1"/>
</dbReference>
<dbReference type="Pfam" id="PF00125">
    <property type="entry name" value="Histone"/>
    <property type="match status" value="1"/>
</dbReference>
<dbReference type="Pfam" id="PF16211">
    <property type="entry name" value="Histone_H2A_C"/>
    <property type="match status" value="1"/>
</dbReference>
<dbReference type="PRINTS" id="PR00620">
    <property type="entry name" value="HISTONEH2A"/>
</dbReference>
<dbReference type="SMART" id="SM00414">
    <property type="entry name" value="H2A"/>
    <property type="match status" value="1"/>
</dbReference>
<dbReference type="SUPFAM" id="SSF47113">
    <property type="entry name" value="Histone-fold"/>
    <property type="match status" value="1"/>
</dbReference>
<dbReference type="PROSITE" id="PS00046">
    <property type="entry name" value="HISTONE_H2A"/>
    <property type="match status" value="1"/>
</dbReference>
<proteinExistence type="inferred from homology"/>
<comment type="function">
    <text>Core component of nucleosome which plays a central role in DNA double strand break (DSB) repair. Nucleosomes wrap and compact DNA into chromatin, limiting DNA accessibility to the cellular machineries which require DNA as a template. Histones thereby play a central role in transcription regulation, DNA repair, DNA replication and chromosomal stability. DNA accessibility is regulated via a complex set of post-translational modifications of histones, also called histone code, and nucleosome remodeling.</text>
</comment>
<comment type="subunit">
    <text>The nucleosome is a histone octamer containing two molecules each of H2A, H2B, H3 and H4 assembled in one H3-H4 heterotetramer and two H2A-H2B heterodimers. The octamer wraps approximately 147 bp of DNA.</text>
</comment>
<comment type="subcellular location">
    <subcellularLocation>
        <location>Nucleus</location>
    </subcellularLocation>
    <subcellularLocation>
        <location>Chromosome</location>
    </subcellularLocation>
</comment>
<comment type="domain">
    <text>The [ST]-Q motif constitutes a recognition sequence for kinases from the PI3/PI4-kinase family.</text>
</comment>
<comment type="PTM">
    <text evidence="1">Phosphorylated to form H2AS128ph (gamma-H2A) in response to DNA double-strand breaks (DSBs) generated by exogenous genotoxic agents and by stalled replication forks. Phosphorylation is dependent on the DNA damage checkpoint kinases mec-1/ATR and tel-1/ATM, spreads on either side of a detected DSB site and may mark the surrounding chromatin for recruitment of proteins required for DNA damage signaling and repair. Gamma-H2A is removed from the DNA prior to the strand invasion-primer extension step of the repair process and subsequently dephosphorylated. Dephosphorylation is necessary for efficient recovery from the DNA damage checkpoint (By similarity).</text>
</comment>
<comment type="PTM">
    <text evidence="1">Acetylated by esa-1 to form H2AK4ac and H2AK7ac.</text>
</comment>
<comment type="miscellaneous">
    <text evidence="3">In contrast to vertebrates and insects, its C-terminus is not monoubiquitinated.</text>
</comment>
<comment type="similarity">
    <text evidence="3">Belongs to the histone H2A family.</text>
</comment>
<comment type="caution">
    <text evidence="3">To ensure consistency between histone entries, we follow the 'Brno' nomenclature for histone modifications, with positions referring to those used in the literature for the 'closest' model organism. Due to slight variations in histone sequences between organisms and to the presence of initiator methionine in UniProtKB/Swiss-Prot sequences, the actual positions of modified amino acids in the sequence generally differ. In this entry the following conventions are used: H2AK4ac = acetylated Lys-6; H2AK7ac = acetylated Lys-10; H2AS128ph = phosphorylated Ser-131.</text>
</comment>
<accession>Q8X132</accession>
<accession>Q7S3Y4</accession>
<name>H2A_NEUCR</name>